<gene>
    <name evidence="1" type="primary">tgt</name>
    <name type="ordered locus">Rpic_2957</name>
</gene>
<name>TGT_RALPJ</name>
<accession>B2UC75</accession>
<feature type="chain" id="PRO_1000097556" description="Queuine tRNA-ribosyltransferase">
    <location>
        <begin position="1"/>
        <end position="383"/>
    </location>
</feature>
<feature type="region of interest" description="RNA binding" evidence="1">
    <location>
        <begin position="258"/>
        <end position="264"/>
    </location>
</feature>
<feature type="region of interest" description="RNA binding; important for wobble base 34 recognition" evidence="1">
    <location>
        <begin position="282"/>
        <end position="286"/>
    </location>
</feature>
<feature type="active site" description="Proton acceptor" evidence="1">
    <location>
        <position position="90"/>
    </location>
</feature>
<feature type="active site" description="Nucleophile" evidence="1">
    <location>
        <position position="277"/>
    </location>
</feature>
<feature type="binding site" evidence="1">
    <location>
        <begin position="90"/>
        <end position="94"/>
    </location>
    <ligand>
        <name>substrate</name>
    </ligand>
</feature>
<feature type="binding site" evidence="1">
    <location>
        <position position="144"/>
    </location>
    <ligand>
        <name>substrate</name>
    </ligand>
</feature>
<feature type="binding site" evidence="1">
    <location>
        <position position="193"/>
    </location>
    <ligand>
        <name>substrate</name>
    </ligand>
</feature>
<feature type="binding site" evidence="1">
    <location>
        <position position="227"/>
    </location>
    <ligand>
        <name>substrate</name>
    </ligand>
</feature>
<feature type="binding site" evidence="1">
    <location>
        <position position="315"/>
    </location>
    <ligand>
        <name>Zn(2+)</name>
        <dbReference type="ChEBI" id="CHEBI:29105"/>
    </ligand>
</feature>
<feature type="binding site" evidence="1">
    <location>
        <position position="317"/>
    </location>
    <ligand>
        <name>Zn(2+)</name>
        <dbReference type="ChEBI" id="CHEBI:29105"/>
    </ligand>
</feature>
<feature type="binding site" evidence="1">
    <location>
        <position position="320"/>
    </location>
    <ligand>
        <name>Zn(2+)</name>
        <dbReference type="ChEBI" id="CHEBI:29105"/>
    </ligand>
</feature>
<feature type="binding site" evidence="1">
    <location>
        <position position="346"/>
    </location>
    <ligand>
        <name>Zn(2+)</name>
        <dbReference type="ChEBI" id="CHEBI:29105"/>
    </ligand>
</feature>
<comment type="function">
    <text evidence="1">Catalyzes the base-exchange of a guanine (G) residue with the queuine precursor 7-aminomethyl-7-deazaguanine (PreQ1) at position 34 (anticodon wobble position) in tRNAs with GU(N) anticodons (tRNA-Asp, -Asn, -His and -Tyr). Catalysis occurs through a double-displacement mechanism. The nucleophile active site attacks the C1' of nucleotide 34 to detach the guanine base from the RNA, forming a covalent enzyme-RNA intermediate. The proton acceptor active site deprotonates the incoming PreQ1, allowing a nucleophilic attack on the C1' of the ribose to form the product. After dissociation, two additional enzymatic reactions on the tRNA convert PreQ1 to queuine (Q), resulting in the hypermodified nucleoside queuosine (7-(((4,5-cis-dihydroxy-2-cyclopenten-1-yl)amino)methyl)-7-deazaguanosine).</text>
</comment>
<comment type="catalytic activity">
    <reaction evidence="1">
        <text>7-aminomethyl-7-carbaguanine + guanosine(34) in tRNA = 7-aminomethyl-7-carbaguanosine(34) in tRNA + guanine</text>
        <dbReference type="Rhea" id="RHEA:24104"/>
        <dbReference type="Rhea" id="RHEA-COMP:10341"/>
        <dbReference type="Rhea" id="RHEA-COMP:10342"/>
        <dbReference type="ChEBI" id="CHEBI:16235"/>
        <dbReference type="ChEBI" id="CHEBI:58703"/>
        <dbReference type="ChEBI" id="CHEBI:74269"/>
        <dbReference type="ChEBI" id="CHEBI:82833"/>
        <dbReference type="EC" id="2.4.2.29"/>
    </reaction>
</comment>
<comment type="cofactor">
    <cofactor evidence="1">
        <name>Zn(2+)</name>
        <dbReference type="ChEBI" id="CHEBI:29105"/>
    </cofactor>
    <text evidence="1">Binds 1 zinc ion per subunit.</text>
</comment>
<comment type="pathway">
    <text evidence="1">tRNA modification; tRNA-queuosine biosynthesis.</text>
</comment>
<comment type="subunit">
    <text evidence="1">Homodimer. Within each dimer, one monomer is responsible for RNA recognition and catalysis, while the other monomer binds to the replacement base PreQ1.</text>
</comment>
<comment type="similarity">
    <text evidence="1">Belongs to the queuine tRNA-ribosyltransferase family.</text>
</comment>
<proteinExistence type="inferred from homology"/>
<protein>
    <recommendedName>
        <fullName evidence="1">Queuine tRNA-ribosyltransferase</fullName>
        <ecNumber evidence="1">2.4.2.29</ecNumber>
    </recommendedName>
    <alternativeName>
        <fullName evidence="1">Guanine insertion enzyme</fullName>
    </alternativeName>
    <alternativeName>
        <fullName evidence="1">tRNA-guanine transglycosylase</fullName>
    </alternativeName>
</protein>
<dbReference type="EC" id="2.4.2.29" evidence="1"/>
<dbReference type="EMBL" id="CP001068">
    <property type="protein sequence ID" value="ACD28080.1"/>
    <property type="molecule type" value="Genomic_DNA"/>
</dbReference>
<dbReference type="SMR" id="B2UC75"/>
<dbReference type="STRING" id="402626.Rpic_2957"/>
<dbReference type="KEGG" id="rpi:Rpic_2957"/>
<dbReference type="PATRIC" id="fig|402626.5.peg.4093"/>
<dbReference type="eggNOG" id="COG0343">
    <property type="taxonomic scope" value="Bacteria"/>
</dbReference>
<dbReference type="HOGENOM" id="CLU_022060_0_1_4"/>
<dbReference type="UniPathway" id="UPA00392"/>
<dbReference type="GO" id="GO:0005829">
    <property type="term" value="C:cytosol"/>
    <property type="evidence" value="ECO:0007669"/>
    <property type="project" value="TreeGrafter"/>
</dbReference>
<dbReference type="GO" id="GO:0046872">
    <property type="term" value="F:metal ion binding"/>
    <property type="evidence" value="ECO:0007669"/>
    <property type="project" value="UniProtKB-KW"/>
</dbReference>
<dbReference type="GO" id="GO:0008479">
    <property type="term" value="F:tRNA-guanosine(34) queuine transglycosylase activity"/>
    <property type="evidence" value="ECO:0007669"/>
    <property type="project" value="UniProtKB-UniRule"/>
</dbReference>
<dbReference type="GO" id="GO:0008616">
    <property type="term" value="P:queuosine biosynthetic process"/>
    <property type="evidence" value="ECO:0007669"/>
    <property type="project" value="UniProtKB-UniRule"/>
</dbReference>
<dbReference type="GO" id="GO:0002099">
    <property type="term" value="P:tRNA wobble guanine modification"/>
    <property type="evidence" value="ECO:0007669"/>
    <property type="project" value="TreeGrafter"/>
</dbReference>
<dbReference type="GO" id="GO:0101030">
    <property type="term" value="P:tRNA-guanine transglycosylation"/>
    <property type="evidence" value="ECO:0007669"/>
    <property type="project" value="InterPro"/>
</dbReference>
<dbReference type="FunFam" id="3.20.20.105:FF:000001">
    <property type="entry name" value="Queuine tRNA-ribosyltransferase"/>
    <property type="match status" value="1"/>
</dbReference>
<dbReference type="Gene3D" id="3.20.20.105">
    <property type="entry name" value="Queuine tRNA-ribosyltransferase-like"/>
    <property type="match status" value="1"/>
</dbReference>
<dbReference type="HAMAP" id="MF_00168">
    <property type="entry name" value="Q_tRNA_Tgt"/>
    <property type="match status" value="1"/>
</dbReference>
<dbReference type="InterPro" id="IPR050076">
    <property type="entry name" value="ArchSynthase1/Queuine_TRR"/>
</dbReference>
<dbReference type="InterPro" id="IPR004803">
    <property type="entry name" value="TGT"/>
</dbReference>
<dbReference type="InterPro" id="IPR036511">
    <property type="entry name" value="TGT-like_sf"/>
</dbReference>
<dbReference type="InterPro" id="IPR002616">
    <property type="entry name" value="tRNA_ribo_trans-like"/>
</dbReference>
<dbReference type="NCBIfam" id="TIGR00430">
    <property type="entry name" value="Q_tRNA_tgt"/>
    <property type="match status" value="1"/>
</dbReference>
<dbReference type="NCBIfam" id="TIGR00449">
    <property type="entry name" value="tgt_general"/>
    <property type="match status" value="1"/>
</dbReference>
<dbReference type="PANTHER" id="PTHR46499">
    <property type="entry name" value="QUEUINE TRNA-RIBOSYLTRANSFERASE"/>
    <property type="match status" value="1"/>
</dbReference>
<dbReference type="PANTHER" id="PTHR46499:SF1">
    <property type="entry name" value="QUEUINE TRNA-RIBOSYLTRANSFERASE"/>
    <property type="match status" value="1"/>
</dbReference>
<dbReference type="Pfam" id="PF01702">
    <property type="entry name" value="TGT"/>
    <property type="match status" value="1"/>
</dbReference>
<dbReference type="SUPFAM" id="SSF51713">
    <property type="entry name" value="tRNA-guanine transglycosylase"/>
    <property type="match status" value="1"/>
</dbReference>
<organism>
    <name type="scientific">Ralstonia pickettii (strain 12J)</name>
    <dbReference type="NCBI Taxonomy" id="402626"/>
    <lineage>
        <taxon>Bacteria</taxon>
        <taxon>Pseudomonadati</taxon>
        <taxon>Pseudomonadota</taxon>
        <taxon>Betaproteobacteria</taxon>
        <taxon>Burkholderiales</taxon>
        <taxon>Burkholderiaceae</taxon>
        <taxon>Ralstonia</taxon>
    </lineage>
</organism>
<evidence type="ECO:0000255" key="1">
    <source>
        <dbReference type="HAMAP-Rule" id="MF_00168"/>
    </source>
</evidence>
<sequence>MLKYELLTTDGLARRGRMTLNHGVVETPIFMPVGTYGAVKAMSPAELKDIGAQIILGNTFHLWLRPGLEVMDAHKGLHGFNGWDKPILTDSGGFQVFSLGDLRKITEDGVTFASPINGDKLFLSPEISMQIQRRLNSDIVMQFDECTPYKIGDRPATEAEAAASMRMSLRWAQRSRNEFEREKNPNALFAIVQGGMFENLRDESLAGLQAIDADAGGEGFGGYAIGGLSVGEPKEDMMRVLQHVAPRLPADKPHYLMGVGTPEDLVAGVAAGVDMFDCVMPTRNARNGWLFTRFGDIKIKNAVHRNDPRPLDETCGCYTCSNFSRAYLHHLQRVGEILGARLNTIHNLYYYLELMAEMRTAIESHGFAAFQARFAADRARGAL</sequence>
<reference key="1">
    <citation type="submission" date="2008-05" db="EMBL/GenBank/DDBJ databases">
        <title>Complete sequence of chromosome 1 of Ralstonia pickettii 12J.</title>
        <authorList>
            <person name="Lucas S."/>
            <person name="Copeland A."/>
            <person name="Lapidus A."/>
            <person name="Glavina del Rio T."/>
            <person name="Dalin E."/>
            <person name="Tice H."/>
            <person name="Bruce D."/>
            <person name="Goodwin L."/>
            <person name="Pitluck S."/>
            <person name="Meincke L."/>
            <person name="Brettin T."/>
            <person name="Detter J.C."/>
            <person name="Han C."/>
            <person name="Kuske C.R."/>
            <person name="Schmutz J."/>
            <person name="Larimer F."/>
            <person name="Land M."/>
            <person name="Hauser L."/>
            <person name="Kyrpides N."/>
            <person name="Mikhailova N."/>
            <person name="Marsh T."/>
            <person name="Richardson P."/>
        </authorList>
    </citation>
    <scope>NUCLEOTIDE SEQUENCE [LARGE SCALE GENOMIC DNA]</scope>
    <source>
        <strain>12J</strain>
    </source>
</reference>
<keyword id="KW-0328">Glycosyltransferase</keyword>
<keyword id="KW-0479">Metal-binding</keyword>
<keyword id="KW-0671">Queuosine biosynthesis</keyword>
<keyword id="KW-0808">Transferase</keyword>
<keyword id="KW-0819">tRNA processing</keyword>
<keyword id="KW-0862">Zinc</keyword>